<protein>
    <recommendedName>
        <fullName evidence="1">Eukaryotic translation initiation factor 3 subunit C</fullName>
        <shortName evidence="1">eIF3c</shortName>
    </recommendedName>
    <alternativeName>
        <fullName evidence="1">Eukaryotic translation initiation factor 3 subunit 8</fullName>
    </alternativeName>
</protein>
<dbReference type="EMBL" id="BC097542">
    <property type="protein sequence ID" value="AAH97542.1"/>
    <property type="molecule type" value="mRNA"/>
</dbReference>
<dbReference type="RefSeq" id="NP_001129648.1">
    <property type="nucleotide sequence ID" value="NM_001136176.1"/>
</dbReference>
<dbReference type="SMR" id="Q4QR58"/>
<dbReference type="BioGRID" id="932866">
    <property type="interactions" value="3"/>
</dbReference>
<dbReference type="IntAct" id="Q4QR58">
    <property type="interactions" value="1"/>
</dbReference>
<dbReference type="DNASU" id="100191027"/>
<dbReference type="GeneID" id="100191027"/>
<dbReference type="KEGG" id="xla:100191027"/>
<dbReference type="AGR" id="Xenbase:XB-GENE-5720535"/>
<dbReference type="CTD" id="100191027"/>
<dbReference type="Xenbase" id="XB-GENE-5720535">
    <property type="gene designation" value="eif3c.L"/>
</dbReference>
<dbReference type="OrthoDB" id="29647at2759"/>
<dbReference type="CD-CODE" id="78E86D56">
    <property type="entry name" value="Mitochondrial cloud"/>
</dbReference>
<dbReference type="Proteomes" id="UP000186698">
    <property type="component" value="Chromosome 9_10L"/>
</dbReference>
<dbReference type="Bgee" id="100191027">
    <property type="expression patterns" value="Expressed in internal ear and 19 other cell types or tissues"/>
</dbReference>
<dbReference type="GO" id="GO:0016282">
    <property type="term" value="C:eukaryotic 43S preinitiation complex"/>
    <property type="evidence" value="ECO:0007669"/>
    <property type="project" value="UniProtKB-UniRule"/>
</dbReference>
<dbReference type="GO" id="GO:0033290">
    <property type="term" value="C:eukaryotic 48S preinitiation complex"/>
    <property type="evidence" value="ECO:0007669"/>
    <property type="project" value="UniProtKB-UniRule"/>
</dbReference>
<dbReference type="GO" id="GO:0005852">
    <property type="term" value="C:eukaryotic translation initiation factor 3 complex"/>
    <property type="evidence" value="ECO:0000250"/>
    <property type="project" value="UniProtKB"/>
</dbReference>
<dbReference type="GO" id="GO:0003723">
    <property type="term" value="F:RNA binding"/>
    <property type="evidence" value="ECO:0007669"/>
    <property type="project" value="InterPro"/>
</dbReference>
<dbReference type="GO" id="GO:0003743">
    <property type="term" value="F:translation initiation factor activity"/>
    <property type="evidence" value="ECO:0007669"/>
    <property type="project" value="UniProtKB-UniRule"/>
</dbReference>
<dbReference type="GO" id="GO:0031369">
    <property type="term" value="F:translation initiation factor binding"/>
    <property type="evidence" value="ECO:0000318"/>
    <property type="project" value="GO_Central"/>
</dbReference>
<dbReference type="GO" id="GO:0001732">
    <property type="term" value="P:formation of cytoplasmic translation initiation complex"/>
    <property type="evidence" value="ECO:0007669"/>
    <property type="project" value="UniProtKB-UniRule"/>
</dbReference>
<dbReference type="GO" id="GO:0006413">
    <property type="term" value="P:translational initiation"/>
    <property type="evidence" value="ECO:0000250"/>
    <property type="project" value="UniProtKB"/>
</dbReference>
<dbReference type="HAMAP" id="MF_03002">
    <property type="entry name" value="eIF3c"/>
    <property type="match status" value="1"/>
</dbReference>
<dbReference type="InterPro" id="IPR027516">
    <property type="entry name" value="EIF3C"/>
</dbReference>
<dbReference type="InterPro" id="IPR008905">
    <property type="entry name" value="EIF3C_N_dom"/>
</dbReference>
<dbReference type="InterPro" id="IPR000717">
    <property type="entry name" value="PCI_dom"/>
</dbReference>
<dbReference type="InterPro" id="IPR036390">
    <property type="entry name" value="WH_DNA-bd_sf"/>
</dbReference>
<dbReference type="PANTHER" id="PTHR13937">
    <property type="entry name" value="EUKARYOTIC TRANSLATION INITATION FACTOR 3, SUBUNIT 8 EIF3S8 -RELATED"/>
    <property type="match status" value="1"/>
</dbReference>
<dbReference type="PANTHER" id="PTHR13937:SF0">
    <property type="entry name" value="EUKARYOTIC TRANSLATION INITIATION FACTOR 3 SUBUNIT C-RELATED"/>
    <property type="match status" value="1"/>
</dbReference>
<dbReference type="Pfam" id="PF05470">
    <property type="entry name" value="eIF-3c_N"/>
    <property type="match status" value="1"/>
</dbReference>
<dbReference type="Pfam" id="PF01399">
    <property type="entry name" value="PCI"/>
    <property type="match status" value="1"/>
</dbReference>
<dbReference type="SMART" id="SM00088">
    <property type="entry name" value="PINT"/>
    <property type="match status" value="1"/>
</dbReference>
<dbReference type="SUPFAM" id="SSF46785">
    <property type="entry name" value="Winged helix' DNA-binding domain"/>
    <property type="match status" value="1"/>
</dbReference>
<dbReference type="PROSITE" id="PS50250">
    <property type="entry name" value="PCI"/>
    <property type="match status" value="1"/>
</dbReference>
<organism>
    <name type="scientific">Xenopus laevis</name>
    <name type="common">African clawed frog</name>
    <dbReference type="NCBI Taxonomy" id="8355"/>
    <lineage>
        <taxon>Eukaryota</taxon>
        <taxon>Metazoa</taxon>
        <taxon>Chordata</taxon>
        <taxon>Craniata</taxon>
        <taxon>Vertebrata</taxon>
        <taxon>Euteleostomi</taxon>
        <taxon>Amphibia</taxon>
        <taxon>Batrachia</taxon>
        <taxon>Anura</taxon>
        <taxon>Pipoidea</taxon>
        <taxon>Pipidae</taxon>
        <taxon>Xenopodinae</taxon>
        <taxon>Xenopus</taxon>
        <taxon>Xenopus</taxon>
    </lineage>
</organism>
<sequence length="926" mass="107004">MSRFFATGSDSESESSLSGDEILPKPVGGTFGKQPIILSDDEEDTKRVVRSAKDKRFEELTNLIKTIRNAMKIRDMTKCLEEFELLVKAFIKAKNIVDKEGVPRFYIRLLSDLDDYLNELWEDKEGKKKMNKNNAKALSTLRQKLRKYNRDFEASITAYKQNPEESADEDQEKDEDSEASSSSDDDSDEGMSASKFLKKAESAPPESRSKFLKKEEAEDEAESSEDEDWGSDSDESDSDESDDENKHASMASRFLKKTVTEGDRQAVEKKKEDKAKKKQHRKVKRKDEEGEEGEEDDNEGGGEWEKVKGGVPLVKEKPKMFAKGTEITPPIVVKKLNEILLARGKKGTDRAAQIELLQLLAGIAEENNLGQGIAVKIKFNIMASLYDYNTNLATYMKSDMWKKCLDCIHDLLDILFANSNMFIGEHIVEDSENLSNLEQPLRVRGCILTLIERMEEEFTKIMQNTDPHSQEYVDNLKDEARVCEVIERAQKYLQEKGSTEEICRVYLRRIMHTYYKFDYKAHQRQLSTEQESKSEQDQAENEAEDSAILMDRLCKYIYAKDRTDRIRTCAILCHIYHHALHNRWFQARDLMLMSHLQDNIQHADPPVQILYNRTMVQLGICAFRQGMIRDAHNALLDIQSSGRAKELLGQGLLMRTMQERNQEQEKIEKRRQIPFHMHINLELLECVYLVSAMLLEIPYMAAHEFDARRRMISKQFHHQLRVGERQPLLGPPESMREHVVAASKAMKMGDWKTCKNFIINEKMNGKVWDLFPEAERVRGMLVRKIQEESLRTYLFTYSSVYDSIRMGILGDMFQLEIPTVHSIISKMIINEELMASLDQPTQTVVMHGTEPSSLQNTALQLAEKLGNLVENNERIFDHKQGSYGGYFNRGDRGDRGDRDQKDQYQRKEGGYMRRGYRRDQQGQSNY</sequence>
<accession>Q4QR58</accession>
<gene>
    <name type="primary">eif3c</name>
    <name type="synonym">eif3s8</name>
</gene>
<proteinExistence type="evidence at transcript level"/>
<comment type="function">
    <text evidence="1">Component of the eukaryotic translation initiation factor 3 (eIF-3) complex, which is involved in protein synthesis of a specialized repertoire of mRNAs and, together with other initiation factors, stimulates binding of mRNA and methionyl-tRNAi to the 40S ribosome. The eIF-3 complex specifically targets and initiates translation of a subset of mRNAs involved in cell proliferation.</text>
</comment>
<comment type="subunit">
    <text evidence="1">Component of the eukaryotic translation initiation factor 3 (eIF-3) complex, which is composed of 13 subunits: eif3a, eif3b, eif3c, eif3d, eif3e, eif3f, eif3g, eif3h, eif3i, eif3j, eif3k, eif3l and eif3m.</text>
</comment>
<comment type="subcellular location">
    <subcellularLocation>
        <location evidence="1">Cytoplasm</location>
    </subcellularLocation>
</comment>
<comment type="similarity">
    <text evidence="1">Belongs to the eIF-3 subunit C family.</text>
</comment>
<keyword id="KW-0963">Cytoplasm</keyword>
<keyword id="KW-0396">Initiation factor</keyword>
<keyword id="KW-0648">Protein biosynthesis</keyword>
<keyword id="KW-1185">Reference proteome</keyword>
<feature type="chain" id="PRO_0000365378" description="Eukaryotic translation initiation factor 3 subunit C">
    <location>
        <begin position="1"/>
        <end position="926"/>
    </location>
</feature>
<feature type="domain" description="PCI" evidence="2">
    <location>
        <begin position="675"/>
        <end position="851"/>
    </location>
</feature>
<feature type="region of interest" description="Disordered" evidence="3">
    <location>
        <begin position="1"/>
        <end position="36"/>
    </location>
</feature>
<feature type="region of interest" description="Disordered" evidence="3">
    <location>
        <begin position="158"/>
        <end position="309"/>
    </location>
</feature>
<feature type="region of interest" description="Disordered" evidence="3">
    <location>
        <begin position="880"/>
        <end position="926"/>
    </location>
</feature>
<feature type="compositionally biased region" description="Low complexity" evidence="3">
    <location>
        <begin position="8"/>
        <end position="21"/>
    </location>
</feature>
<feature type="compositionally biased region" description="Acidic residues" evidence="3">
    <location>
        <begin position="165"/>
        <end position="189"/>
    </location>
</feature>
<feature type="compositionally biased region" description="Basic and acidic residues" evidence="3">
    <location>
        <begin position="207"/>
        <end position="216"/>
    </location>
</feature>
<feature type="compositionally biased region" description="Acidic residues" evidence="3">
    <location>
        <begin position="217"/>
        <end position="243"/>
    </location>
</feature>
<feature type="compositionally biased region" description="Basic and acidic residues" evidence="3">
    <location>
        <begin position="258"/>
        <end position="275"/>
    </location>
</feature>
<feature type="compositionally biased region" description="Acidic residues" evidence="3">
    <location>
        <begin position="289"/>
        <end position="302"/>
    </location>
</feature>
<feature type="compositionally biased region" description="Basic and acidic residues" evidence="3">
    <location>
        <begin position="889"/>
        <end position="911"/>
    </location>
</feature>
<reference key="1">
    <citation type="submission" date="2005-06" db="EMBL/GenBank/DDBJ databases">
        <authorList>
            <consortium name="NIH - Xenopus Gene Collection (XGC) project"/>
        </authorList>
    </citation>
    <scope>NUCLEOTIDE SEQUENCE [LARGE SCALE MRNA]</scope>
    <source>
        <tissue>Embryo</tissue>
    </source>
</reference>
<evidence type="ECO:0000255" key="1">
    <source>
        <dbReference type="HAMAP-Rule" id="MF_03002"/>
    </source>
</evidence>
<evidence type="ECO:0000255" key="2">
    <source>
        <dbReference type="PROSITE-ProRule" id="PRU01185"/>
    </source>
</evidence>
<evidence type="ECO:0000256" key="3">
    <source>
        <dbReference type="SAM" id="MobiDB-lite"/>
    </source>
</evidence>
<name>EIF3C_XENLA</name>